<evidence type="ECO:0000255" key="1">
    <source>
        <dbReference type="HAMAP-Rule" id="MF_00743"/>
    </source>
</evidence>
<evidence type="ECO:0000305" key="2"/>
<proteinExistence type="inferred from homology"/>
<name>FUMC_COREF</name>
<gene>
    <name evidence="1" type="primary">fumC</name>
    <name type="ordered locus">CE1071</name>
</gene>
<keyword id="KW-0963">Cytoplasm</keyword>
<keyword id="KW-0456">Lyase</keyword>
<keyword id="KW-1185">Reference proteome</keyword>
<keyword id="KW-0816">Tricarboxylic acid cycle</keyword>
<feature type="chain" id="PRO_0000161271" description="Fumarate hydratase class II">
    <location>
        <begin position="1"/>
        <end position="473"/>
    </location>
</feature>
<feature type="active site" description="Proton donor/acceptor" evidence="1">
    <location>
        <position position="187"/>
    </location>
</feature>
<feature type="active site" evidence="1">
    <location>
        <position position="318"/>
    </location>
</feature>
<feature type="binding site" evidence="1">
    <location>
        <begin position="104"/>
        <end position="106"/>
    </location>
    <ligand>
        <name>substrate</name>
    </ligand>
</feature>
<feature type="binding site" description="in site B" evidence="1">
    <location>
        <begin position="128"/>
        <end position="131"/>
    </location>
    <ligand>
        <name>substrate</name>
    </ligand>
</feature>
<feature type="binding site" evidence="1">
    <location>
        <begin position="138"/>
        <end position="140"/>
    </location>
    <ligand>
        <name>substrate</name>
    </ligand>
</feature>
<feature type="binding site" evidence="1">
    <location>
        <position position="186"/>
    </location>
    <ligand>
        <name>substrate</name>
    </ligand>
</feature>
<feature type="binding site" evidence="1">
    <location>
        <position position="319"/>
    </location>
    <ligand>
        <name>substrate</name>
    </ligand>
</feature>
<feature type="binding site" evidence="1">
    <location>
        <begin position="324"/>
        <end position="326"/>
    </location>
    <ligand>
        <name>substrate</name>
    </ligand>
</feature>
<feature type="site" description="Important for catalytic activity" evidence="1">
    <location>
        <position position="331"/>
    </location>
</feature>
<dbReference type="EC" id="4.2.1.2" evidence="1"/>
<dbReference type="EMBL" id="BA000035">
    <property type="protein sequence ID" value="BAC17881.1"/>
    <property type="status" value="ALT_INIT"/>
    <property type="molecule type" value="Genomic_DNA"/>
</dbReference>
<dbReference type="SMR" id="Q8FQP8"/>
<dbReference type="STRING" id="196164.gene:10741479"/>
<dbReference type="KEGG" id="cef:CE1071"/>
<dbReference type="eggNOG" id="COG0114">
    <property type="taxonomic scope" value="Bacteria"/>
</dbReference>
<dbReference type="HOGENOM" id="CLU_021594_4_1_11"/>
<dbReference type="UniPathway" id="UPA00223">
    <property type="reaction ID" value="UER01007"/>
</dbReference>
<dbReference type="Proteomes" id="UP000001409">
    <property type="component" value="Chromosome"/>
</dbReference>
<dbReference type="GO" id="GO:0005737">
    <property type="term" value="C:cytoplasm"/>
    <property type="evidence" value="ECO:0007669"/>
    <property type="project" value="UniProtKB-SubCell"/>
</dbReference>
<dbReference type="GO" id="GO:0004333">
    <property type="term" value="F:fumarate hydratase activity"/>
    <property type="evidence" value="ECO:0007669"/>
    <property type="project" value="UniProtKB-UniRule"/>
</dbReference>
<dbReference type="GO" id="GO:0006106">
    <property type="term" value="P:fumarate metabolic process"/>
    <property type="evidence" value="ECO:0007669"/>
    <property type="project" value="InterPro"/>
</dbReference>
<dbReference type="GO" id="GO:0006099">
    <property type="term" value="P:tricarboxylic acid cycle"/>
    <property type="evidence" value="ECO:0007669"/>
    <property type="project" value="UniProtKB-UniRule"/>
</dbReference>
<dbReference type="CDD" id="cd01362">
    <property type="entry name" value="Fumarase_classII"/>
    <property type="match status" value="1"/>
</dbReference>
<dbReference type="FunFam" id="1.10.275.10:FF:000001">
    <property type="entry name" value="Fumarate hydratase, mitochondrial"/>
    <property type="match status" value="1"/>
</dbReference>
<dbReference type="FunFam" id="1.20.200.10:FF:000001">
    <property type="entry name" value="Fumarate hydratase, mitochondrial"/>
    <property type="match status" value="1"/>
</dbReference>
<dbReference type="Gene3D" id="1.10.40.30">
    <property type="entry name" value="Fumarase/aspartase (C-terminal domain)"/>
    <property type="match status" value="1"/>
</dbReference>
<dbReference type="Gene3D" id="1.20.200.10">
    <property type="entry name" value="Fumarase/aspartase (Central domain)"/>
    <property type="match status" value="1"/>
</dbReference>
<dbReference type="Gene3D" id="1.10.275.10">
    <property type="entry name" value="Fumarase/aspartase (N-terminal domain)"/>
    <property type="match status" value="1"/>
</dbReference>
<dbReference type="HAMAP" id="MF_00743">
    <property type="entry name" value="FumaraseC"/>
    <property type="match status" value="1"/>
</dbReference>
<dbReference type="InterPro" id="IPR005677">
    <property type="entry name" value="Fum_hydII"/>
</dbReference>
<dbReference type="InterPro" id="IPR024083">
    <property type="entry name" value="Fumarase/histidase_N"/>
</dbReference>
<dbReference type="InterPro" id="IPR018951">
    <property type="entry name" value="Fumarase_C_C"/>
</dbReference>
<dbReference type="InterPro" id="IPR020557">
    <property type="entry name" value="Fumarate_lyase_CS"/>
</dbReference>
<dbReference type="InterPro" id="IPR000362">
    <property type="entry name" value="Fumarate_lyase_fam"/>
</dbReference>
<dbReference type="InterPro" id="IPR022761">
    <property type="entry name" value="Fumarate_lyase_N"/>
</dbReference>
<dbReference type="InterPro" id="IPR008948">
    <property type="entry name" value="L-Aspartase-like"/>
</dbReference>
<dbReference type="NCBIfam" id="NF008909">
    <property type="entry name" value="PRK12273.1"/>
    <property type="match status" value="1"/>
</dbReference>
<dbReference type="PANTHER" id="PTHR11444">
    <property type="entry name" value="ASPARTATEAMMONIA/ARGININOSUCCINATE/ADENYLOSUCCINATE LYASE"/>
    <property type="match status" value="1"/>
</dbReference>
<dbReference type="PANTHER" id="PTHR11444:SF22">
    <property type="entry name" value="FUMARATE HYDRATASE CLASS II"/>
    <property type="match status" value="1"/>
</dbReference>
<dbReference type="Pfam" id="PF10415">
    <property type="entry name" value="FumaraseC_C"/>
    <property type="match status" value="1"/>
</dbReference>
<dbReference type="Pfam" id="PF00206">
    <property type="entry name" value="Lyase_1"/>
    <property type="match status" value="1"/>
</dbReference>
<dbReference type="PRINTS" id="PR00145">
    <property type="entry name" value="ARGSUCLYASE"/>
</dbReference>
<dbReference type="PRINTS" id="PR00149">
    <property type="entry name" value="FUMRATELYASE"/>
</dbReference>
<dbReference type="SUPFAM" id="SSF48557">
    <property type="entry name" value="L-aspartase-like"/>
    <property type="match status" value="1"/>
</dbReference>
<dbReference type="PROSITE" id="PS00163">
    <property type="entry name" value="FUMARATE_LYASES"/>
    <property type="match status" value="1"/>
</dbReference>
<comment type="function">
    <text evidence="1">Involved in the TCA cycle. Catalyzes the stereospecific interconversion of fumarate to L-malate.</text>
</comment>
<comment type="catalytic activity">
    <reaction evidence="1">
        <text>(S)-malate = fumarate + H2O</text>
        <dbReference type="Rhea" id="RHEA:12460"/>
        <dbReference type="ChEBI" id="CHEBI:15377"/>
        <dbReference type="ChEBI" id="CHEBI:15589"/>
        <dbReference type="ChEBI" id="CHEBI:29806"/>
        <dbReference type="EC" id="4.2.1.2"/>
    </reaction>
</comment>
<comment type="pathway">
    <text evidence="1">Carbohydrate metabolism; tricarboxylic acid cycle; (S)-malate from fumarate: step 1/1.</text>
</comment>
<comment type="subunit">
    <text evidence="1">Homotetramer.</text>
</comment>
<comment type="subcellular location">
    <subcellularLocation>
        <location evidence="1">Cytoplasm</location>
    </subcellularLocation>
</comment>
<comment type="miscellaneous">
    <text evidence="1">There are 2 substrate-binding sites: the catalytic A site, and the non-catalytic B site that may play a role in the transfer of substrate or product between the active site and the solvent. Alternatively, the B site may bind allosteric effectors.</text>
</comment>
<comment type="similarity">
    <text evidence="1">Belongs to the class-II fumarase/aspartase family. Fumarase subfamily.</text>
</comment>
<comment type="sequence caution" evidence="2">
    <conflict type="erroneous initiation">
        <sequence resource="EMBL-CDS" id="BAC17881"/>
    </conflict>
    <text>Extended N-terminus.</text>
</comment>
<reference key="1">
    <citation type="journal article" date="2003" name="Genome Res.">
        <title>Comparative complete genome sequence analysis of the amino acid replacements responsible for the thermostability of Corynebacterium efficiens.</title>
        <authorList>
            <person name="Nishio Y."/>
            <person name="Nakamura Y."/>
            <person name="Kawarabayasi Y."/>
            <person name="Usuda Y."/>
            <person name="Kimura E."/>
            <person name="Sugimoto S."/>
            <person name="Matsui K."/>
            <person name="Yamagishi A."/>
            <person name="Kikuchi H."/>
            <person name="Ikeo K."/>
            <person name="Gojobori T."/>
        </authorList>
    </citation>
    <scope>NUCLEOTIDE SEQUENCE [LARGE SCALE GENOMIC DNA]</scope>
    <source>
        <strain>DSM 44549 / YS-314 / AJ 12310 / JCM 11189 / NBRC 100395</strain>
    </source>
</reference>
<organism>
    <name type="scientific">Corynebacterium efficiens (strain DSM 44549 / YS-314 / AJ 12310 / JCM 11189 / NBRC 100395)</name>
    <dbReference type="NCBI Taxonomy" id="196164"/>
    <lineage>
        <taxon>Bacteria</taxon>
        <taxon>Bacillati</taxon>
        <taxon>Actinomycetota</taxon>
        <taxon>Actinomycetes</taxon>
        <taxon>Mycobacteriales</taxon>
        <taxon>Corynebacteriaceae</taxon>
        <taxon>Corynebacterium</taxon>
    </lineage>
</organism>
<sequence length="473" mass="50073">MSDFMTEQEFRIEHDTMGEVKVPAQALWRAQTQRAVENFPISGRGLESAQIRAMGLLKAACAQVNKDSGALDAAKADAIIAAGKEIATGKHDAEFPIDVFQTGSGTSSNMNTNEVIASIAKANGTEVHPNDDVNMGQSSNDTFPTATHVAATEAAVNDLIPGLKVLHESLAKKANEWDSVVKSGRTHLMDAVPVTLGQEFGGYARQIQLGIERIEATLPRLGELAIGGTAVGTGINTSADFGGKVVAELVELTGVTQLQEAANHFEAQANRDALVEFSGAMRVVAVSLYKIANDIRLMGSGPLTGLGEIQLPDLQPGSSIMPGKVNPVLCETATQVSAQVIGNDAAVAFAGSQGQFELNVFIPVMARNVLESARLLANTARVFATRLVDGIVPNEEHMKQLAESSPSIVTPLNSAIGYEAAAKVAKAALAEGKTIRQTVIDMGFVDGEKLTEEELDKRLDVLAMANTDRKQKF</sequence>
<protein>
    <recommendedName>
        <fullName evidence="1">Fumarate hydratase class II</fullName>
        <shortName evidence="1">Fumarase C</shortName>
        <ecNumber evidence="1">4.2.1.2</ecNumber>
    </recommendedName>
    <alternativeName>
        <fullName evidence="1">Aerobic fumarase</fullName>
    </alternativeName>
    <alternativeName>
        <fullName evidence="1">Iron-independent fumarase</fullName>
    </alternativeName>
</protein>
<accession>Q8FQP8</accession>